<proteinExistence type="evidence at protein level"/>
<dbReference type="EMBL" id="BN000781">
    <property type="protein sequence ID" value="CAI99161.1"/>
    <property type="molecule type" value="Genomic_DNA"/>
</dbReference>
<dbReference type="EMBL" id="AL670943">
    <property type="status" value="NOT_ANNOTATED_CDS"/>
    <property type="molecule type" value="Genomic_DNA"/>
</dbReference>
<dbReference type="EMBL" id="CH466564">
    <property type="protein sequence ID" value="EDL14047.1"/>
    <property type="molecule type" value="Genomic_DNA"/>
</dbReference>
<dbReference type="EMBL" id="BC064821">
    <property type="protein sequence ID" value="AAH64821.1"/>
    <property type="molecule type" value="mRNA"/>
</dbReference>
<dbReference type="CCDS" id="CCDS30344.1"/>
<dbReference type="RefSeq" id="NP_955762.1">
    <property type="nucleotide sequence ID" value="NM_199468.2"/>
</dbReference>
<dbReference type="SMR" id="Q6P1Y1"/>
<dbReference type="STRING" id="10090.ENSMUSP00000060157"/>
<dbReference type="iPTMnet" id="Q6P1Y1"/>
<dbReference type="PhosphoSitePlus" id="Q6P1Y1"/>
<dbReference type="PaxDb" id="10090-ENSMUSP00000060157"/>
<dbReference type="Antibodypedia" id="56109">
    <property type="antibodies" value="69 antibodies from 14 providers"/>
</dbReference>
<dbReference type="DNASU" id="213436"/>
<dbReference type="Ensembl" id="ENSMUST00000062010.10">
    <property type="protein sequence ID" value="ENSMUSP00000060157.10"/>
    <property type="gene ID" value="ENSMUSG00000047686.10"/>
</dbReference>
<dbReference type="GeneID" id="213436"/>
<dbReference type="KEGG" id="mmu:213436"/>
<dbReference type="UCSC" id="uc009ubw.1">
    <property type="organism name" value="mouse"/>
</dbReference>
<dbReference type="AGR" id="MGI:2685221"/>
<dbReference type="CTD" id="203430"/>
<dbReference type="MGI" id="MGI:2685221">
    <property type="gene designation" value="Rtl3"/>
</dbReference>
<dbReference type="VEuPathDB" id="HostDB:ENSMUSG00000047686"/>
<dbReference type="eggNOG" id="ENOG502S3G3">
    <property type="taxonomic scope" value="Eukaryota"/>
</dbReference>
<dbReference type="GeneTree" id="ENSGT00940000163808"/>
<dbReference type="HOGENOM" id="CLU_045127_0_0_1"/>
<dbReference type="InParanoid" id="Q6P1Y1"/>
<dbReference type="OMA" id="HQYATHF"/>
<dbReference type="OrthoDB" id="9600801at2759"/>
<dbReference type="PhylomeDB" id="Q6P1Y1"/>
<dbReference type="TreeFam" id="TF335133"/>
<dbReference type="BioGRID-ORCS" id="213436">
    <property type="hits" value="2 hits in 76 CRISPR screens"/>
</dbReference>
<dbReference type="PRO" id="PR:Q6P1Y1"/>
<dbReference type="Proteomes" id="UP000000589">
    <property type="component" value="Chromosome X"/>
</dbReference>
<dbReference type="RNAct" id="Q6P1Y1">
    <property type="molecule type" value="protein"/>
</dbReference>
<dbReference type="Bgee" id="ENSMUSG00000047686">
    <property type="expression patterns" value="Expressed in efferent duct and 71 other cell types or tissues"/>
</dbReference>
<dbReference type="GO" id="GO:0005634">
    <property type="term" value="C:nucleus"/>
    <property type="evidence" value="ECO:0007669"/>
    <property type="project" value="UniProtKB-SubCell"/>
</dbReference>
<dbReference type="GO" id="GO:0003676">
    <property type="term" value="F:nucleic acid binding"/>
    <property type="evidence" value="ECO:0007669"/>
    <property type="project" value="InterPro"/>
</dbReference>
<dbReference type="GO" id="GO:0008270">
    <property type="term" value="F:zinc ion binding"/>
    <property type="evidence" value="ECO:0007669"/>
    <property type="project" value="UniProtKB-KW"/>
</dbReference>
<dbReference type="Gene3D" id="4.10.60.10">
    <property type="entry name" value="Zinc finger, CCHC-type"/>
    <property type="match status" value="1"/>
</dbReference>
<dbReference type="InterPro" id="IPR032549">
    <property type="entry name" value="DUF4939"/>
</dbReference>
<dbReference type="InterPro" id="IPR032567">
    <property type="entry name" value="RTL1-rel"/>
</dbReference>
<dbReference type="InterPro" id="IPR001878">
    <property type="entry name" value="Znf_CCHC"/>
</dbReference>
<dbReference type="InterPro" id="IPR036875">
    <property type="entry name" value="Znf_CCHC_sf"/>
</dbReference>
<dbReference type="PANTHER" id="PTHR15503">
    <property type="entry name" value="LDOC1 RELATED"/>
    <property type="match status" value="1"/>
</dbReference>
<dbReference type="PANTHER" id="PTHR15503:SF7">
    <property type="entry name" value="RETROTRANSPOSON GAG-LIKE PROTEIN 3"/>
    <property type="match status" value="1"/>
</dbReference>
<dbReference type="Pfam" id="PF16297">
    <property type="entry name" value="DUF4939"/>
    <property type="match status" value="1"/>
</dbReference>
<dbReference type="Pfam" id="PF00098">
    <property type="entry name" value="zf-CCHC"/>
    <property type="match status" value="1"/>
</dbReference>
<dbReference type="SMART" id="SM00343">
    <property type="entry name" value="ZnF_C2HC"/>
    <property type="match status" value="1"/>
</dbReference>
<dbReference type="SUPFAM" id="SSF57756">
    <property type="entry name" value="Retrovirus zinc finger-like domains"/>
    <property type="match status" value="1"/>
</dbReference>
<dbReference type="PROSITE" id="PS50158">
    <property type="entry name" value="ZF_CCHC"/>
    <property type="match status" value="1"/>
</dbReference>
<comment type="function">
    <text evidence="6 8">May function as a transcriptional regulator (Probable). Plays a role in postnatal myogenesis, may be involved in the regulation of satellite cells self-renewal (PubMed:27446912).</text>
</comment>
<comment type="subcellular location">
    <subcellularLocation>
        <location evidence="8">Nucleus</location>
    </subcellularLocation>
</comment>
<comment type="tissue specificity">
    <text evidence="6">Expressed in embryonic myogenic progenitor cells, not expressed in adult and aged satellite cells.</text>
</comment>
<comment type="developmental stage">
    <text evidence="6">In myogenic progenitor cells, not expressed during early myogenic development, appears during early formation of the satellite cell pool (from 12.5 dpc to 17.5 dpc), before being completely down-regulated during adquisition of satellite cell quiescence.</text>
</comment>
<comment type="miscellaneous">
    <text evidence="5">RTL3 is one of at least 11 genes called Mar or Mart related to long terminal repeat retrotransposons. They do not correspond to functional retrotransposons, but rather to neofunctionalized retrotransposons genes.</text>
</comment>
<feature type="chain" id="PRO_0000440243" description="Retrotransposon Gag-like protein 3">
    <location>
        <begin position="1"/>
        <end position="553"/>
    </location>
</feature>
<feature type="zinc finger region" description="CCHC-type" evidence="3">
    <location>
        <begin position="523"/>
        <end position="537"/>
    </location>
</feature>
<feature type="region of interest" description="Disordered" evidence="4">
    <location>
        <begin position="38"/>
        <end position="274"/>
    </location>
</feature>
<feature type="region of interest" description="Disordered" evidence="4">
    <location>
        <begin position="474"/>
        <end position="514"/>
    </location>
</feature>
<feature type="coiled-coil region" evidence="2">
    <location>
        <begin position="2"/>
        <end position="43"/>
    </location>
</feature>
<feature type="compositionally biased region" description="Basic and acidic residues" evidence="4">
    <location>
        <begin position="45"/>
        <end position="57"/>
    </location>
</feature>
<feature type="compositionally biased region" description="Low complexity" evidence="4">
    <location>
        <begin position="58"/>
        <end position="73"/>
    </location>
</feature>
<feature type="compositionally biased region" description="Basic and acidic residues" evidence="4">
    <location>
        <begin position="87"/>
        <end position="113"/>
    </location>
</feature>
<feature type="compositionally biased region" description="Polar residues" evidence="4">
    <location>
        <begin position="118"/>
        <end position="127"/>
    </location>
</feature>
<feature type="compositionally biased region" description="Basic and acidic residues" evidence="4">
    <location>
        <begin position="132"/>
        <end position="147"/>
    </location>
</feature>
<feature type="compositionally biased region" description="Polar residues" evidence="4">
    <location>
        <begin position="239"/>
        <end position="250"/>
    </location>
</feature>
<feature type="compositionally biased region" description="Low complexity" evidence="4">
    <location>
        <begin position="474"/>
        <end position="483"/>
    </location>
</feature>
<feature type="compositionally biased region" description="Polar residues" evidence="4">
    <location>
        <begin position="495"/>
        <end position="507"/>
    </location>
</feature>
<reference key="1">
    <citation type="journal article" date="2005" name="J. Mol. Evol.">
        <title>A small family of sushi-class retrotransposon-derived genes in mammals and their relation to genomic imprinting.</title>
        <authorList>
            <person name="Youngson N.A."/>
            <person name="Kocialkowski S."/>
            <person name="Peel N."/>
            <person name="Ferguson-Smith A.C."/>
        </authorList>
    </citation>
    <scope>NUCLEOTIDE SEQUENCE [GENOMIC DNA]</scope>
    <source>
        <strain>C57B16/J</strain>
    </source>
</reference>
<reference key="2">
    <citation type="submission" date="2005-09" db="EMBL/GenBank/DDBJ databases">
        <authorList>
            <person name="Mural R.J."/>
            <person name="Adams M.D."/>
            <person name="Myers E.W."/>
            <person name="Smith H.O."/>
            <person name="Venter J.C."/>
        </authorList>
    </citation>
    <scope>NUCLEOTIDE SEQUENCE [LARGE SCALE GENOMIC DNA]</scope>
</reference>
<reference key="3">
    <citation type="journal article" date="2009" name="PLoS Biol.">
        <title>Lineage-specific biology revealed by a finished genome assembly of the mouse.</title>
        <authorList>
            <person name="Church D.M."/>
            <person name="Goodstadt L."/>
            <person name="Hillier L.W."/>
            <person name="Zody M.C."/>
            <person name="Goldstein S."/>
            <person name="She X."/>
            <person name="Bult C.J."/>
            <person name="Agarwala R."/>
            <person name="Cherry J.L."/>
            <person name="DiCuccio M."/>
            <person name="Hlavina W."/>
            <person name="Kapustin Y."/>
            <person name="Meric P."/>
            <person name="Maglott D."/>
            <person name="Birtle Z."/>
            <person name="Marques A.C."/>
            <person name="Graves T."/>
            <person name="Zhou S."/>
            <person name="Teague B."/>
            <person name="Potamousis K."/>
            <person name="Churas C."/>
            <person name="Place M."/>
            <person name="Herschleb J."/>
            <person name="Runnheim R."/>
            <person name="Forrest D."/>
            <person name="Amos-Landgraf J."/>
            <person name="Schwartz D.C."/>
            <person name="Cheng Z."/>
            <person name="Lindblad-Toh K."/>
            <person name="Eichler E.E."/>
            <person name="Ponting C.P."/>
        </authorList>
    </citation>
    <scope>NUCLEOTIDE SEQUENCE [LARGE SCALE GENOMIC DNA]</scope>
    <source>
        <strain>C57B16/J</strain>
    </source>
</reference>
<reference key="4">
    <citation type="journal article" date="2004" name="Genome Res.">
        <title>The status, quality, and expansion of the NIH full-length cDNA project: the Mammalian Gene Collection (MGC).</title>
        <authorList>
            <consortium name="The MGC Project Team"/>
        </authorList>
    </citation>
    <scope>NUCLEOTIDE SEQUENCE [LARGE SCALE MRNA]</scope>
</reference>
<reference key="5">
    <citation type="journal article" date="2005" name="Cytogenet. Genome Res.">
        <title>A family of neofunctionalized Ty3/gypsy retrotransposon genes in mammalian genomes.</title>
        <authorList>
            <person name="Brandt J."/>
            <person name="Veith A.-M."/>
            <person name="Volff J.-N."/>
        </authorList>
    </citation>
    <scope>GENE FAMILY</scope>
</reference>
<reference key="6">
    <citation type="journal article" date="2014" name="Mol. Cell. Proteomics">
        <title>Immunoaffinity enrichment and mass spectrometry analysis of protein methylation.</title>
        <authorList>
            <person name="Guo A."/>
            <person name="Gu H."/>
            <person name="Zhou J."/>
            <person name="Mulhern D."/>
            <person name="Wang Y."/>
            <person name="Lee K.A."/>
            <person name="Yang V."/>
            <person name="Aguiar M."/>
            <person name="Kornhauser J."/>
            <person name="Jia X."/>
            <person name="Ren J."/>
            <person name="Beausoleil S.A."/>
            <person name="Silva J.C."/>
            <person name="Vemulapalli V."/>
            <person name="Bedford M.T."/>
            <person name="Comb M.J."/>
        </authorList>
    </citation>
    <scope>IDENTIFICATION BY MASS SPECTROMETRY [LARGE SCALE ANALYSIS]</scope>
    <source>
        <tissue>Brain</tissue>
    </source>
</reference>
<reference key="7">
    <citation type="journal article" date="2016" name="Front. Cell Dev. Biol.">
        <title>Gene expression profiling of muscle stem cells identifies novel regulators of postnatal myogenesis.</title>
        <authorList>
            <person name="Alonso-Martin S."/>
            <person name="Rochat A."/>
            <person name="Mademtzoglou D."/>
            <person name="Morais J."/>
            <person name="de Reynies A."/>
            <person name="Aurade F."/>
            <person name="Chang T.H."/>
            <person name="Zammit P.S."/>
            <person name="Relaix F."/>
        </authorList>
    </citation>
    <scope>FUNCTION</scope>
    <scope>DEVELOPMENTAL STAGE</scope>
    <scope>TISSUE SPECIFICITY</scope>
</reference>
<protein>
    <recommendedName>
        <fullName evidence="1">Retrotransposon Gag-like protein 3</fullName>
    </recommendedName>
    <alternativeName>
        <fullName evidence="9">Zinc finger CCHC domain-containing protein 5</fullName>
    </alternativeName>
</protein>
<accession>Q6P1Y1</accession>
<organism>
    <name type="scientific">Mus musculus</name>
    <name type="common">Mouse</name>
    <dbReference type="NCBI Taxonomy" id="10090"/>
    <lineage>
        <taxon>Eukaryota</taxon>
        <taxon>Metazoa</taxon>
        <taxon>Chordata</taxon>
        <taxon>Craniata</taxon>
        <taxon>Vertebrata</taxon>
        <taxon>Euteleostomi</taxon>
        <taxon>Mammalia</taxon>
        <taxon>Eutheria</taxon>
        <taxon>Euarchontoglires</taxon>
        <taxon>Glires</taxon>
        <taxon>Rodentia</taxon>
        <taxon>Myomorpha</taxon>
        <taxon>Muroidea</taxon>
        <taxon>Muridae</taxon>
        <taxon>Murinae</taxon>
        <taxon>Mus</taxon>
        <taxon>Mus</taxon>
    </lineage>
</organism>
<sequence>MVEDLAASYVTLKLENEILQAQVKRLMEENAALQAQIPELQKSGAVKEHEPLRKPSEAQEPPESPEFPAARESQNPWEPPATTEPGEPTKIREPREPSAISELREPPEIKEPQEPPETNESGESSAITEFRGSPEIKEPHLPPKSKEYWGPQELPMVKESWEPPEALDSTAWKPPAVKESQEIQKALESPATQRPQASPRGYDLPAVCEAEPTDNQGTPALKELQSPQLHNPTNDEESQTVPEYQETSSQLEPLEHPPPQETLEPRVPQEPLDPSDAEEFLELSVPEESLEGLIVARTGTEQAQCELEATTLPLEYPLAFSEDFQKLSEFLVQLTSYLRSRGYPTEAALVSFVGSFFSGEAGRMFQPLLDSQPPLVEQFERLLRALQDTFDNPESLEVANQGLPQLRQGEGLAPRYSTRFHLIAQELDLGESTLCIQFQEELASSIQNELSCTSPATNLSDVIIECVTLEEKASGGVDSSSSSSEEENGSEGPPTENQPVQATSNRPHLSEAERARRREGHLCLYCGHPGHFARDCPVKPHRVQQAGNMEARR</sequence>
<evidence type="ECO:0000250" key="1">
    <source>
        <dbReference type="UniProtKB" id="Q8N8U3"/>
    </source>
</evidence>
<evidence type="ECO:0000255" key="2"/>
<evidence type="ECO:0000255" key="3">
    <source>
        <dbReference type="PROSITE-ProRule" id="PRU00047"/>
    </source>
</evidence>
<evidence type="ECO:0000256" key="4">
    <source>
        <dbReference type="SAM" id="MobiDB-lite"/>
    </source>
</evidence>
<evidence type="ECO:0000269" key="5">
    <source>
    </source>
</evidence>
<evidence type="ECO:0000269" key="6">
    <source>
    </source>
</evidence>
<evidence type="ECO:0000303" key="7">
    <source>
    </source>
</evidence>
<evidence type="ECO:0000305" key="8">
    <source>
    </source>
</evidence>
<evidence type="ECO:0000312" key="9">
    <source>
        <dbReference type="MGI" id="MGI:2685221"/>
    </source>
</evidence>
<gene>
    <name evidence="1" type="primary">Rtl3</name>
    <name evidence="7" type="synonym">Mar3</name>
    <name evidence="7" type="synonym">MArt3</name>
    <name evidence="9" type="synonym">Zcchc5</name>
</gene>
<keyword id="KW-0175">Coiled coil</keyword>
<keyword id="KW-0479">Metal-binding</keyword>
<keyword id="KW-0539">Nucleus</keyword>
<keyword id="KW-1185">Reference proteome</keyword>
<keyword id="KW-0862">Zinc</keyword>
<keyword id="KW-0863">Zinc-finger</keyword>
<name>RTL3_MOUSE</name>